<proteinExistence type="inferred from homology"/>
<name>RBN_SALTI</name>
<feature type="chain" id="PRO_0000155890" description="Ribonuclease BN">
    <location>
        <begin position="1"/>
        <end position="305"/>
    </location>
</feature>
<feature type="active site" description="Proton acceptor" evidence="1">
    <location>
        <position position="68"/>
    </location>
</feature>
<feature type="binding site" evidence="1">
    <location>
        <position position="64"/>
    </location>
    <ligand>
        <name>Zn(2+)</name>
        <dbReference type="ChEBI" id="CHEBI:29105"/>
        <label>1</label>
        <note>catalytic</note>
    </ligand>
</feature>
<feature type="binding site" evidence="1">
    <location>
        <position position="66"/>
    </location>
    <ligand>
        <name>Zn(2+)</name>
        <dbReference type="ChEBI" id="CHEBI:29105"/>
        <label>1</label>
        <note>catalytic</note>
    </ligand>
</feature>
<feature type="binding site" evidence="1">
    <location>
        <position position="68"/>
    </location>
    <ligand>
        <name>Zn(2+)</name>
        <dbReference type="ChEBI" id="CHEBI:29105"/>
        <label>2</label>
        <note>catalytic</note>
    </ligand>
</feature>
<feature type="binding site" evidence="1">
    <location>
        <position position="69"/>
    </location>
    <ligand>
        <name>Zn(2+)</name>
        <dbReference type="ChEBI" id="CHEBI:29105"/>
        <label>2</label>
        <note>catalytic</note>
    </ligand>
</feature>
<feature type="binding site" evidence="1">
    <location>
        <position position="141"/>
    </location>
    <ligand>
        <name>Zn(2+)</name>
        <dbReference type="ChEBI" id="CHEBI:29105"/>
        <label>1</label>
        <note>catalytic</note>
    </ligand>
</feature>
<feature type="binding site" evidence="1">
    <location>
        <position position="212"/>
    </location>
    <ligand>
        <name>Zn(2+)</name>
        <dbReference type="ChEBI" id="CHEBI:29105"/>
        <label>1</label>
        <note>catalytic</note>
    </ligand>
</feature>
<feature type="binding site" evidence="1">
    <location>
        <position position="212"/>
    </location>
    <ligand>
        <name>Zn(2+)</name>
        <dbReference type="ChEBI" id="CHEBI:29105"/>
        <label>2</label>
        <note>catalytic</note>
    </ligand>
</feature>
<feature type="binding site" evidence="1">
    <location>
        <position position="270"/>
    </location>
    <ligand>
        <name>Zn(2+)</name>
        <dbReference type="ChEBI" id="CHEBI:29105"/>
        <label>2</label>
        <note>catalytic</note>
    </ligand>
</feature>
<organism>
    <name type="scientific">Salmonella typhi</name>
    <dbReference type="NCBI Taxonomy" id="90370"/>
    <lineage>
        <taxon>Bacteria</taxon>
        <taxon>Pseudomonadati</taxon>
        <taxon>Pseudomonadota</taxon>
        <taxon>Gammaproteobacteria</taxon>
        <taxon>Enterobacterales</taxon>
        <taxon>Enterobacteriaceae</taxon>
        <taxon>Salmonella</taxon>
    </lineage>
</organism>
<reference key="1">
    <citation type="journal article" date="2001" name="Nature">
        <title>Complete genome sequence of a multiple drug resistant Salmonella enterica serovar Typhi CT18.</title>
        <authorList>
            <person name="Parkhill J."/>
            <person name="Dougan G."/>
            <person name="James K.D."/>
            <person name="Thomson N.R."/>
            <person name="Pickard D."/>
            <person name="Wain J."/>
            <person name="Churcher C.M."/>
            <person name="Mungall K.L."/>
            <person name="Bentley S.D."/>
            <person name="Holden M.T.G."/>
            <person name="Sebaihia M."/>
            <person name="Baker S."/>
            <person name="Basham D."/>
            <person name="Brooks K."/>
            <person name="Chillingworth T."/>
            <person name="Connerton P."/>
            <person name="Cronin A."/>
            <person name="Davis P."/>
            <person name="Davies R.M."/>
            <person name="Dowd L."/>
            <person name="White N."/>
            <person name="Farrar J."/>
            <person name="Feltwell T."/>
            <person name="Hamlin N."/>
            <person name="Haque A."/>
            <person name="Hien T.T."/>
            <person name="Holroyd S."/>
            <person name="Jagels K."/>
            <person name="Krogh A."/>
            <person name="Larsen T.S."/>
            <person name="Leather S."/>
            <person name="Moule S."/>
            <person name="O'Gaora P."/>
            <person name="Parry C."/>
            <person name="Quail M.A."/>
            <person name="Rutherford K.M."/>
            <person name="Simmonds M."/>
            <person name="Skelton J."/>
            <person name="Stevens K."/>
            <person name="Whitehead S."/>
            <person name="Barrell B.G."/>
        </authorList>
    </citation>
    <scope>NUCLEOTIDE SEQUENCE [LARGE SCALE GENOMIC DNA]</scope>
    <source>
        <strain>CT18</strain>
    </source>
</reference>
<reference key="2">
    <citation type="journal article" date="2003" name="J. Bacteriol.">
        <title>Comparative genomics of Salmonella enterica serovar Typhi strains Ty2 and CT18.</title>
        <authorList>
            <person name="Deng W."/>
            <person name="Liou S.-R."/>
            <person name="Plunkett G. III"/>
            <person name="Mayhew G.F."/>
            <person name="Rose D.J."/>
            <person name="Burland V."/>
            <person name="Kodoyianni V."/>
            <person name="Schwartz D.C."/>
            <person name="Blattner F.R."/>
        </authorList>
    </citation>
    <scope>NUCLEOTIDE SEQUENCE [LARGE SCALE GENOMIC DNA]</scope>
    <source>
        <strain>ATCC 700931 / Ty2</strain>
    </source>
</reference>
<sequence length="305" mass="32877">MELIFLGTSAGVPTRSRNVTAILLHLQHPTQPGVWLFDCGEGTQHQMLNTAFHPGKLERIFISHLHGDHLFGLPGLLCSRSMAGNPHPLTVYGPQGVREFIATTLRLSGSWTDFPLQIEEISAGDILDDGLRKVTAFRLEHPLECYGYRVVEHDKPGALNARALKAAGVTPGPLFQALKAGKTVTLADGRQINGADYLAPAVAGKSVAIFGDTAPCEAALALAQGVDVMVHETTLDASMEEKANARGHSSTRQTATLAREAAVGRLIMTHISSRYDDKGCQRLLAECRAIFPATELAYDFSVFPV</sequence>
<comment type="function">
    <text evidence="1">Zinc phosphodiesterase, which has both exoribonuclease and endoribonuclease activities.</text>
</comment>
<comment type="cofactor">
    <cofactor evidence="1">
        <name>Zn(2+)</name>
        <dbReference type="ChEBI" id="CHEBI:29105"/>
    </cofactor>
    <text evidence="1">Binds 2 Zn(2+) ions.</text>
</comment>
<comment type="subunit">
    <text evidence="1">Homodimer.</text>
</comment>
<comment type="similarity">
    <text evidence="1">Belongs to the RNase Z family. RNase BN subfamily.</text>
</comment>
<gene>
    <name evidence="1" type="primary">rbn</name>
    <name type="synonym">elaC</name>
    <name type="synonym">rnz</name>
    <name type="ordered locus">STY2544</name>
    <name type="ordered locus">t0550</name>
</gene>
<protein>
    <recommendedName>
        <fullName evidence="1">Ribonuclease BN</fullName>
        <shortName evidence="1">RNase BN</shortName>
        <ecNumber evidence="1">3.1.-.-</ecNumber>
    </recommendedName>
    <alternativeName>
        <fullName evidence="1">Ribonuclease Z homolog</fullName>
        <shortName evidence="1">RNase Z homolog</shortName>
    </alternativeName>
</protein>
<evidence type="ECO:0000255" key="1">
    <source>
        <dbReference type="HAMAP-Rule" id="MF_01818"/>
    </source>
</evidence>
<keyword id="KW-0255">Endonuclease</keyword>
<keyword id="KW-0269">Exonuclease</keyword>
<keyword id="KW-0378">Hydrolase</keyword>
<keyword id="KW-0479">Metal-binding</keyword>
<keyword id="KW-0540">Nuclease</keyword>
<keyword id="KW-0819">tRNA processing</keyword>
<keyword id="KW-0862">Zinc</keyword>
<dbReference type="EC" id="3.1.-.-" evidence="1"/>
<dbReference type="EMBL" id="AL513382">
    <property type="protein sequence ID" value="CAD07546.1"/>
    <property type="molecule type" value="Genomic_DNA"/>
</dbReference>
<dbReference type="EMBL" id="AE014613">
    <property type="protein sequence ID" value="AAO68256.1"/>
    <property type="molecule type" value="Genomic_DNA"/>
</dbReference>
<dbReference type="RefSeq" id="NP_456856.1">
    <property type="nucleotide sequence ID" value="NC_003198.1"/>
</dbReference>
<dbReference type="RefSeq" id="WP_000419093.1">
    <property type="nucleotide sequence ID" value="NZ_WSUR01000039.1"/>
</dbReference>
<dbReference type="SMR" id="P60194"/>
<dbReference type="STRING" id="220341.gene:17586443"/>
<dbReference type="KEGG" id="stt:t0550"/>
<dbReference type="KEGG" id="sty:STY2544"/>
<dbReference type="PATRIC" id="fig|220341.7.peg.2574"/>
<dbReference type="eggNOG" id="COG1234">
    <property type="taxonomic scope" value="Bacteria"/>
</dbReference>
<dbReference type="HOGENOM" id="CLU_031317_2_0_6"/>
<dbReference type="OMA" id="GTQRQMM"/>
<dbReference type="OrthoDB" id="9803916at2"/>
<dbReference type="Proteomes" id="UP000000541">
    <property type="component" value="Chromosome"/>
</dbReference>
<dbReference type="Proteomes" id="UP000002670">
    <property type="component" value="Chromosome"/>
</dbReference>
<dbReference type="GO" id="GO:0042781">
    <property type="term" value="F:3'-tRNA processing endoribonuclease activity"/>
    <property type="evidence" value="ECO:0007669"/>
    <property type="project" value="TreeGrafter"/>
</dbReference>
<dbReference type="GO" id="GO:0004527">
    <property type="term" value="F:exonuclease activity"/>
    <property type="evidence" value="ECO:0007669"/>
    <property type="project" value="UniProtKB-UniRule"/>
</dbReference>
<dbReference type="GO" id="GO:0008270">
    <property type="term" value="F:zinc ion binding"/>
    <property type="evidence" value="ECO:0007669"/>
    <property type="project" value="UniProtKB-UniRule"/>
</dbReference>
<dbReference type="CDD" id="cd07717">
    <property type="entry name" value="RNaseZ_ZiPD-like_MBL-fold"/>
    <property type="match status" value="1"/>
</dbReference>
<dbReference type="FunFam" id="3.60.15.10:FF:000002">
    <property type="entry name" value="Ribonuclease Z"/>
    <property type="match status" value="1"/>
</dbReference>
<dbReference type="Gene3D" id="3.60.15.10">
    <property type="entry name" value="Ribonuclease Z/Hydroxyacylglutathione hydrolase-like"/>
    <property type="match status" value="1"/>
</dbReference>
<dbReference type="HAMAP" id="MF_01818">
    <property type="entry name" value="RNase_Z_BN"/>
    <property type="match status" value="1"/>
</dbReference>
<dbReference type="InterPro" id="IPR001279">
    <property type="entry name" value="Metallo-B-lactamas"/>
</dbReference>
<dbReference type="InterPro" id="IPR036866">
    <property type="entry name" value="RibonucZ/Hydroxyglut_hydro"/>
</dbReference>
<dbReference type="InterPro" id="IPR013469">
    <property type="entry name" value="Rnase_BN"/>
</dbReference>
<dbReference type="InterPro" id="IPR013471">
    <property type="entry name" value="RNase_Z/BN"/>
</dbReference>
<dbReference type="NCBIfam" id="NF000800">
    <property type="entry name" value="PRK00055.1-1"/>
    <property type="match status" value="1"/>
</dbReference>
<dbReference type="NCBIfam" id="NF000801">
    <property type="entry name" value="PRK00055.1-3"/>
    <property type="match status" value="1"/>
</dbReference>
<dbReference type="NCBIfam" id="TIGR02651">
    <property type="entry name" value="RNase_Z"/>
    <property type="match status" value="1"/>
</dbReference>
<dbReference type="NCBIfam" id="TIGR02649">
    <property type="entry name" value="true_RNase_BN"/>
    <property type="match status" value="1"/>
</dbReference>
<dbReference type="PANTHER" id="PTHR46018">
    <property type="entry name" value="ZINC PHOSPHODIESTERASE ELAC PROTEIN 1"/>
    <property type="match status" value="1"/>
</dbReference>
<dbReference type="PANTHER" id="PTHR46018:SF2">
    <property type="entry name" value="ZINC PHOSPHODIESTERASE ELAC PROTEIN 1"/>
    <property type="match status" value="1"/>
</dbReference>
<dbReference type="Pfam" id="PF12706">
    <property type="entry name" value="Lactamase_B_2"/>
    <property type="match status" value="2"/>
</dbReference>
<dbReference type="SUPFAM" id="SSF56281">
    <property type="entry name" value="Metallo-hydrolase/oxidoreductase"/>
    <property type="match status" value="1"/>
</dbReference>
<accession>P60194</accession>
<accession>Q8XFF2</accession>